<keyword id="KW-1185">Reference proteome</keyword>
<keyword id="KW-0687">Ribonucleoprotein</keyword>
<keyword id="KW-0689">Ribosomal protein</keyword>
<feature type="chain" id="PRO_0000147124" description="Large ribosomal subunit protein uL16">
    <location>
        <begin position="1" status="less than"/>
        <end position="150"/>
    </location>
</feature>
<feature type="non-terminal residue">
    <location>
        <position position="1"/>
    </location>
</feature>
<sequence length="150" mass="16517">CGGCEAGSAGKDAFHLRVRVHPFHVLRINKMLSCAGADRLQTGMRGAFGKPQGVCARVAIGQVLLSVRCKDGNANHAQEALRRAKFKFPRRQKIIVSRKWGFTKFSRTDYLKYKSENRIVPDGVNAKLLGCHGRLAARQPGRAFLEAVGN</sequence>
<evidence type="ECO:0000250" key="1"/>
<evidence type="ECO:0000305" key="2"/>
<protein>
    <recommendedName>
        <fullName evidence="2">Large ribosomal subunit protein uL16</fullName>
    </recommendedName>
    <alternativeName>
        <fullName>60S ribosomal protein L10</fullName>
    </alternativeName>
    <alternativeName>
        <fullName>QM protein homolog</fullName>
    </alternativeName>
</protein>
<proteinExistence type="evidence at transcript level"/>
<organism>
    <name type="scientific">Nicotiana tabacum</name>
    <name type="common">Common tobacco</name>
    <dbReference type="NCBI Taxonomy" id="4097"/>
    <lineage>
        <taxon>Eukaryota</taxon>
        <taxon>Viridiplantae</taxon>
        <taxon>Streptophyta</taxon>
        <taxon>Embryophyta</taxon>
        <taxon>Tracheophyta</taxon>
        <taxon>Spermatophyta</taxon>
        <taxon>Magnoliopsida</taxon>
        <taxon>eudicotyledons</taxon>
        <taxon>Gunneridae</taxon>
        <taxon>Pentapetalae</taxon>
        <taxon>asterids</taxon>
        <taxon>lamiids</taxon>
        <taxon>Solanales</taxon>
        <taxon>Solanaceae</taxon>
        <taxon>Nicotianoideae</taxon>
        <taxon>Nicotianeae</taxon>
        <taxon>Nicotiana</taxon>
    </lineage>
</organism>
<dbReference type="EMBL" id="Z14083">
    <property type="protein sequence ID" value="CAA78461.1"/>
    <property type="molecule type" value="mRNA"/>
</dbReference>
<dbReference type="PIR" id="S44144">
    <property type="entry name" value="S44144"/>
</dbReference>
<dbReference type="SMR" id="Q40592"/>
<dbReference type="STRING" id="4097.Q40592"/>
<dbReference type="PaxDb" id="4097-Q40592"/>
<dbReference type="Proteomes" id="UP000084051">
    <property type="component" value="Unplaced"/>
</dbReference>
<dbReference type="GO" id="GO:0022625">
    <property type="term" value="C:cytosolic large ribosomal subunit"/>
    <property type="evidence" value="ECO:0000318"/>
    <property type="project" value="GO_Central"/>
</dbReference>
<dbReference type="GO" id="GO:0003735">
    <property type="term" value="F:structural constituent of ribosome"/>
    <property type="evidence" value="ECO:0000318"/>
    <property type="project" value="GO_Central"/>
</dbReference>
<dbReference type="GO" id="GO:0006412">
    <property type="term" value="P:translation"/>
    <property type="evidence" value="ECO:0000318"/>
    <property type="project" value="GO_Central"/>
</dbReference>
<dbReference type="CDD" id="cd01433">
    <property type="entry name" value="Ribosomal_L16_L10e"/>
    <property type="match status" value="1"/>
</dbReference>
<dbReference type="FunFam" id="3.30.60.300:FF:000003">
    <property type="entry name" value="60S ribosomal protein L10, putative"/>
    <property type="match status" value="1"/>
</dbReference>
<dbReference type="Gene3D" id="3.30.60.300">
    <property type="match status" value="1"/>
</dbReference>
<dbReference type="Gene3D" id="3.90.1170.10">
    <property type="entry name" value="Ribosomal protein L10e/L16"/>
    <property type="match status" value="1"/>
</dbReference>
<dbReference type="InterPro" id="IPR047873">
    <property type="entry name" value="Ribosomal_uL16"/>
</dbReference>
<dbReference type="InterPro" id="IPR018255">
    <property type="entry name" value="Ribosomal_uL16_CS_euk_arc"/>
</dbReference>
<dbReference type="InterPro" id="IPR016180">
    <property type="entry name" value="Ribosomal_uL16_dom"/>
</dbReference>
<dbReference type="InterPro" id="IPR001197">
    <property type="entry name" value="Ribosomal_uL16_euk_arch"/>
</dbReference>
<dbReference type="InterPro" id="IPR036920">
    <property type="entry name" value="Ribosomal_uL16_sf"/>
</dbReference>
<dbReference type="NCBIfam" id="NF003239">
    <property type="entry name" value="PRK04199.1-4"/>
    <property type="match status" value="1"/>
</dbReference>
<dbReference type="PANTHER" id="PTHR11726">
    <property type="entry name" value="60S RIBOSOMAL PROTEIN L10"/>
    <property type="match status" value="1"/>
</dbReference>
<dbReference type="Pfam" id="PF00252">
    <property type="entry name" value="Ribosomal_L16"/>
    <property type="match status" value="1"/>
</dbReference>
<dbReference type="SUPFAM" id="SSF54686">
    <property type="entry name" value="Ribosomal protein L16p/L10e"/>
    <property type="match status" value="1"/>
</dbReference>
<dbReference type="PROSITE" id="PS01257">
    <property type="entry name" value="RIBOSOMAL_L10E"/>
    <property type="match status" value="1"/>
</dbReference>
<reference key="1">
    <citation type="submission" date="1994-04" db="EMBL/GenBank/DDBJ databases">
        <authorList>
            <person name="Meyer Y."/>
        </authorList>
    </citation>
    <scope>NUCLEOTIDE SEQUENCE [MRNA]</scope>
    <source>
        <strain>cv. 19</strain>
    </source>
</reference>
<gene>
    <name type="primary">RPL10</name>
</gene>
<accession>Q40592</accession>
<name>RL10_TOBAC</name>
<comment type="subunit">
    <text evidence="1">Component of the small ribosomal subunit. Mature ribosomes consist of a small (40S) and a large (60S) subunit. The 40S subunit contains about 33 different proteins and 1 molecule of RNA (18S). The 60S subunit contains about 49 different proteins and 3 molecules of RNA (25S, 5.8S and 5S) (By similarity).</text>
</comment>
<comment type="similarity">
    <text evidence="2">Belongs to the universal ribosomal protein uL16 family.</text>
</comment>